<proteinExistence type="predicted"/>
<dbReference type="EMBL" id="X68367">
    <property type="protein sequence ID" value="CAA48442.1"/>
    <property type="molecule type" value="Genomic_DNA"/>
</dbReference>
<dbReference type="PIR" id="S30318">
    <property type="entry name" value="S26452"/>
</dbReference>
<dbReference type="RefSeq" id="NP_039770.1">
    <property type="nucleotide sequence ID" value="NC_001337.1"/>
</dbReference>
<dbReference type="RefSeq" id="WP_010889857.1">
    <property type="nucleotide sequence ID" value="NC_001337.1"/>
</dbReference>
<dbReference type="PRO" id="PR:P29574"/>
<accession>P29574</accession>
<protein>
    <recommendedName>
        <fullName>Uncharacterized protein ORF3'</fullName>
    </recommendedName>
</protein>
<geneLocation type="plasmid">
    <name>pFZ1</name>
</geneLocation>
<organism>
    <name type="scientific">Methanothermobacter thermautotrophicus</name>
    <name type="common">Methanobacterium thermoformicicum</name>
    <dbReference type="NCBI Taxonomy" id="145262"/>
    <lineage>
        <taxon>Archaea</taxon>
        <taxon>Methanobacteriati</taxon>
        <taxon>Methanobacteriota</taxon>
        <taxon>Methanomada group</taxon>
        <taxon>Methanobacteria</taxon>
        <taxon>Methanobacteriales</taxon>
        <taxon>Methanobacteriaceae</taxon>
        <taxon>Methanothermobacter</taxon>
    </lineage>
</organism>
<reference key="1">
    <citation type="journal article" date="1992" name="Nucleic Acids Res.">
        <title>Modular organization of related Archaeal plasmids encoding different restriction-modification systems in Methanobacterium thermoformicicum.</title>
        <authorList>
            <person name="Noelling J."/>
            <person name="van Eeden F.J.M."/>
            <person name="Eggen R.I.L."/>
            <person name="de Vos W.M."/>
        </authorList>
    </citation>
    <scope>NUCLEOTIDE SEQUENCE [GENOMIC DNA]</scope>
    <source>
        <strain>DSM 3720 / Z-245</strain>
    </source>
</reference>
<keyword id="KW-0614">Plasmid</keyword>
<feature type="chain" id="PRO_0000066437" description="Uncharacterized protein ORF3'">
    <location>
        <begin position="1"/>
        <end position="217"/>
    </location>
</feature>
<name>YPZ3_METTF</name>
<sequence>MKKLNNIIMILIMHRYFLRVMNLRQKVIEALEEGKSVAIKYQDVRDYLDLKTGHRVIFLEHINPAKETAAEILADLGNLAKSTIYSKYTTNEIVRDIKKRSKNRNVLLVFNDFQLLSKNTARVLLDLMEDVQVLCSIRGRPQKGQGRLLKRMTILSDRSDEVTDIKIPLIVFASFIAILTFVKAGSAIYNRNHFDFYLFSAAIFVGISVGRTLLWIS</sequence>